<comment type="function">
    <text evidence="1">Usually encoded in the trnK tRNA gene intron. Probably assists in splicing its own and other chloroplast group II introns.</text>
</comment>
<comment type="subcellular location">
    <subcellularLocation>
        <location>Plastid</location>
        <location>Chloroplast</location>
    </subcellularLocation>
</comment>
<comment type="similarity">
    <text evidence="1">Belongs to the intron maturase 2 family. MatK subfamily.</text>
</comment>
<gene>
    <name evidence="1" type="primary">matK</name>
</gene>
<reference key="1">
    <citation type="submission" date="2003-06" db="EMBL/GenBank/DDBJ databases">
        <title>Phylogenetic analysis of Malvaceae sensu lato based on chloroplast and nuclear DNA sequences.</title>
        <authorList>
            <person name="Nyffeler R."/>
            <person name="Yen A."/>
            <person name="Alverson W.S."/>
            <person name="Bayer C."/>
            <person name="Blattner F."/>
            <person name="Whitlock B."/>
            <person name="Chase M.W."/>
            <person name="Baum D.A."/>
        </authorList>
    </citation>
    <scope>NUCLEOTIDE SEQUENCE [GENOMIC DNA]</scope>
</reference>
<proteinExistence type="inferred from homology"/>
<protein>
    <recommendedName>
        <fullName evidence="1">Maturase K</fullName>
    </recommendedName>
    <alternativeName>
        <fullName evidence="1">Intron maturase</fullName>
    </alternativeName>
</protein>
<evidence type="ECO:0000255" key="1">
    <source>
        <dbReference type="HAMAP-Rule" id="MF_01390"/>
    </source>
</evidence>
<organism>
    <name type="scientific">Fremontodendron californicum</name>
    <name type="common">California flannelbush</name>
    <name type="synonym">Fremontia californica</name>
    <dbReference type="NCBI Taxonomy" id="93767"/>
    <lineage>
        <taxon>Eukaryota</taxon>
        <taxon>Viridiplantae</taxon>
        <taxon>Streptophyta</taxon>
        <taxon>Embryophyta</taxon>
        <taxon>Tracheophyta</taxon>
        <taxon>Spermatophyta</taxon>
        <taxon>Magnoliopsida</taxon>
        <taxon>eudicotyledons</taxon>
        <taxon>Gunneridae</taxon>
        <taxon>Pentapetalae</taxon>
        <taxon>rosids</taxon>
        <taxon>malvids</taxon>
        <taxon>Malvales</taxon>
        <taxon>Malvaceae</taxon>
        <taxon>Bombacoideae</taxon>
        <taxon>Fremontodendron</taxon>
    </lineage>
</organism>
<name>MATK_FRECA</name>
<accession>Q6EIJ9</accession>
<feature type="chain" id="PRO_0000143391" description="Maturase K">
    <location>
        <begin position="1"/>
        <end position="502"/>
    </location>
</feature>
<dbReference type="EMBL" id="AY321165">
    <property type="protein sequence ID" value="AAQ84247.1"/>
    <property type="molecule type" value="Genomic_DNA"/>
</dbReference>
<dbReference type="GO" id="GO:0009507">
    <property type="term" value="C:chloroplast"/>
    <property type="evidence" value="ECO:0007669"/>
    <property type="project" value="UniProtKB-SubCell"/>
</dbReference>
<dbReference type="GO" id="GO:0003723">
    <property type="term" value="F:RNA binding"/>
    <property type="evidence" value="ECO:0007669"/>
    <property type="project" value="UniProtKB-KW"/>
</dbReference>
<dbReference type="GO" id="GO:0006397">
    <property type="term" value="P:mRNA processing"/>
    <property type="evidence" value="ECO:0007669"/>
    <property type="project" value="UniProtKB-KW"/>
</dbReference>
<dbReference type="GO" id="GO:0008380">
    <property type="term" value="P:RNA splicing"/>
    <property type="evidence" value="ECO:0007669"/>
    <property type="project" value="UniProtKB-UniRule"/>
</dbReference>
<dbReference type="GO" id="GO:0008033">
    <property type="term" value="P:tRNA processing"/>
    <property type="evidence" value="ECO:0007669"/>
    <property type="project" value="UniProtKB-KW"/>
</dbReference>
<dbReference type="HAMAP" id="MF_01390">
    <property type="entry name" value="MatK"/>
    <property type="match status" value="1"/>
</dbReference>
<dbReference type="InterPro" id="IPR024937">
    <property type="entry name" value="Domain_X"/>
</dbReference>
<dbReference type="InterPro" id="IPR002866">
    <property type="entry name" value="Maturase_MatK"/>
</dbReference>
<dbReference type="InterPro" id="IPR024942">
    <property type="entry name" value="Maturase_MatK_N"/>
</dbReference>
<dbReference type="PANTHER" id="PTHR34811">
    <property type="entry name" value="MATURASE K"/>
    <property type="match status" value="1"/>
</dbReference>
<dbReference type="PANTHER" id="PTHR34811:SF1">
    <property type="entry name" value="MATURASE K"/>
    <property type="match status" value="1"/>
</dbReference>
<dbReference type="Pfam" id="PF01348">
    <property type="entry name" value="Intron_maturas2"/>
    <property type="match status" value="1"/>
</dbReference>
<dbReference type="Pfam" id="PF01824">
    <property type="entry name" value="MatK_N"/>
    <property type="match status" value="1"/>
</dbReference>
<geneLocation type="chloroplast"/>
<sequence length="502" mass="59548">MEEFQVYLELNRSRRHDFLYPLIFREYIYALAHDHGLNKSMIFLENQGYGNKFSSLIVKRLIIRMDQQNHLIISANDSNQNPFFGHNNNLYSQMISAGFAVIVEIPFSLRLLSYSQGEEVAKSHNLQSIHSIFPFLEDKFSHLNYALDVLIPHPIHLEILVQALRYWVKDASSLHLLRFSLYEYCNLKSFITPKKSISILNPRLFLFLYNSHACEYESIFLFLRNQSSHLRSTSSGVFLERIFFYGKIEYLVEVFYNDFQNNLWLFKDPFIHFIRYQGKAILASKDTSLLMNKWKYYFVDLWQYYFYMWSQSGRVRINQLSKYSLDFLGYLSSVRLNPSVVRSQMLENSFIIDNTMKKLDTRIPIISLIGSLSKAKFCNTLGHPISKPTWADSSDSDIIDRFVRICRNLSHYHSGSSKKKSLYRIKYILRFSCVKTLARKHKSTVRAFLKRLESEFLEEFFTEEEHVFSLIFPRVFFTSRKLYRGRIWYLDIICINALVNHE</sequence>
<keyword id="KW-0150">Chloroplast</keyword>
<keyword id="KW-0507">mRNA processing</keyword>
<keyword id="KW-0934">Plastid</keyword>
<keyword id="KW-0694">RNA-binding</keyword>
<keyword id="KW-0819">tRNA processing</keyword>